<feature type="chain" id="PRO_1000099380" description="DNA repair protein RecO">
    <location>
        <begin position="1"/>
        <end position="242"/>
    </location>
</feature>
<comment type="function">
    <text evidence="1">Involved in DNA repair and RecF pathway recombination.</text>
</comment>
<comment type="subunit">
    <text evidence="1">Monomer.</text>
</comment>
<comment type="similarity">
    <text evidence="1">Belongs to the RecO family.</text>
</comment>
<gene>
    <name evidence="1" type="primary">recO</name>
    <name type="ordered locus">ECSE_2853</name>
</gene>
<keyword id="KW-0227">DNA damage</keyword>
<keyword id="KW-0233">DNA recombination</keyword>
<keyword id="KW-0234">DNA repair</keyword>
<proteinExistence type="inferred from homology"/>
<sequence length="242" mass="27363">MEGWQRAFVLHSRPWSETSLMLDVFTEESGRVRLVAKGARSKRSTLKGALQPFTPLLLRFGGRGEVKTLRSAEAVSLALPLSGITLYSGLYINELLSRVLEYETRFSELFFDYLHCIQSLAGATGTPEPALRRFELALLGHLGYGVNFTHCAGSGEPVDDTMTYRYREEKGFIASVVIDNKTFTGRQLKALNAREFPDADTLRAAKRFTRMALKPYLGGKPLKSRELFRQFMPKRTVKTHYE</sequence>
<protein>
    <recommendedName>
        <fullName evidence="1">DNA repair protein RecO</fullName>
    </recommendedName>
    <alternativeName>
        <fullName evidence="1">Recombination protein O</fullName>
    </alternativeName>
</protein>
<dbReference type="EMBL" id="AP009240">
    <property type="protein sequence ID" value="BAG78377.1"/>
    <property type="molecule type" value="Genomic_DNA"/>
</dbReference>
<dbReference type="RefSeq" id="WP_000399393.1">
    <property type="nucleotide sequence ID" value="NC_011415.1"/>
</dbReference>
<dbReference type="SMR" id="B6I5D9"/>
<dbReference type="GeneID" id="93774526"/>
<dbReference type="KEGG" id="ecy:ECSE_2853"/>
<dbReference type="HOGENOM" id="CLU_066645_1_0_6"/>
<dbReference type="Proteomes" id="UP000008199">
    <property type="component" value="Chromosome"/>
</dbReference>
<dbReference type="GO" id="GO:0043590">
    <property type="term" value="C:bacterial nucleoid"/>
    <property type="evidence" value="ECO:0007669"/>
    <property type="project" value="TreeGrafter"/>
</dbReference>
<dbReference type="GO" id="GO:0006310">
    <property type="term" value="P:DNA recombination"/>
    <property type="evidence" value="ECO:0007669"/>
    <property type="project" value="UniProtKB-UniRule"/>
</dbReference>
<dbReference type="GO" id="GO:0006302">
    <property type="term" value="P:double-strand break repair"/>
    <property type="evidence" value="ECO:0007669"/>
    <property type="project" value="TreeGrafter"/>
</dbReference>
<dbReference type="FunFam" id="1.20.1440.120:FF:000001">
    <property type="entry name" value="DNA repair protein RecO"/>
    <property type="match status" value="1"/>
</dbReference>
<dbReference type="FunFam" id="2.40.50.140:FF:000074">
    <property type="entry name" value="DNA repair protein RecO"/>
    <property type="match status" value="1"/>
</dbReference>
<dbReference type="Gene3D" id="2.40.50.140">
    <property type="entry name" value="Nucleic acid-binding proteins"/>
    <property type="match status" value="1"/>
</dbReference>
<dbReference type="Gene3D" id="1.20.1440.120">
    <property type="entry name" value="Recombination protein O, C-terminal domain"/>
    <property type="match status" value="1"/>
</dbReference>
<dbReference type="HAMAP" id="MF_00201">
    <property type="entry name" value="RecO"/>
    <property type="match status" value="1"/>
</dbReference>
<dbReference type="InterPro" id="IPR037278">
    <property type="entry name" value="ARFGAP/RecO"/>
</dbReference>
<dbReference type="InterPro" id="IPR022572">
    <property type="entry name" value="DNA_rep/recomb_RecO_N"/>
</dbReference>
<dbReference type="InterPro" id="IPR012340">
    <property type="entry name" value="NA-bd_OB-fold"/>
</dbReference>
<dbReference type="InterPro" id="IPR003717">
    <property type="entry name" value="RecO"/>
</dbReference>
<dbReference type="InterPro" id="IPR042242">
    <property type="entry name" value="RecO_C"/>
</dbReference>
<dbReference type="NCBIfam" id="TIGR00613">
    <property type="entry name" value="reco"/>
    <property type="match status" value="1"/>
</dbReference>
<dbReference type="PANTHER" id="PTHR33991">
    <property type="entry name" value="DNA REPAIR PROTEIN RECO"/>
    <property type="match status" value="1"/>
</dbReference>
<dbReference type="PANTHER" id="PTHR33991:SF1">
    <property type="entry name" value="DNA REPAIR PROTEIN RECO"/>
    <property type="match status" value="1"/>
</dbReference>
<dbReference type="Pfam" id="PF02565">
    <property type="entry name" value="RecO_C"/>
    <property type="match status" value="1"/>
</dbReference>
<dbReference type="Pfam" id="PF11967">
    <property type="entry name" value="RecO_N"/>
    <property type="match status" value="1"/>
</dbReference>
<dbReference type="SUPFAM" id="SSF57863">
    <property type="entry name" value="ArfGap/RecO-like zinc finger"/>
    <property type="match status" value="1"/>
</dbReference>
<dbReference type="SUPFAM" id="SSF50249">
    <property type="entry name" value="Nucleic acid-binding proteins"/>
    <property type="match status" value="1"/>
</dbReference>
<evidence type="ECO:0000255" key="1">
    <source>
        <dbReference type="HAMAP-Rule" id="MF_00201"/>
    </source>
</evidence>
<organism>
    <name type="scientific">Escherichia coli (strain SE11)</name>
    <dbReference type="NCBI Taxonomy" id="409438"/>
    <lineage>
        <taxon>Bacteria</taxon>
        <taxon>Pseudomonadati</taxon>
        <taxon>Pseudomonadota</taxon>
        <taxon>Gammaproteobacteria</taxon>
        <taxon>Enterobacterales</taxon>
        <taxon>Enterobacteriaceae</taxon>
        <taxon>Escherichia</taxon>
    </lineage>
</organism>
<name>RECO_ECOSE</name>
<reference key="1">
    <citation type="journal article" date="2008" name="DNA Res.">
        <title>Complete genome sequence and comparative analysis of the wild-type commensal Escherichia coli strain SE11 isolated from a healthy adult.</title>
        <authorList>
            <person name="Oshima K."/>
            <person name="Toh H."/>
            <person name="Ogura Y."/>
            <person name="Sasamoto H."/>
            <person name="Morita H."/>
            <person name="Park S.-H."/>
            <person name="Ooka T."/>
            <person name="Iyoda S."/>
            <person name="Taylor T.D."/>
            <person name="Hayashi T."/>
            <person name="Itoh K."/>
            <person name="Hattori M."/>
        </authorList>
    </citation>
    <scope>NUCLEOTIDE SEQUENCE [LARGE SCALE GENOMIC DNA]</scope>
    <source>
        <strain>SE11</strain>
    </source>
</reference>
<accession>B6I5D9</accession>